<accession>Q9M2W2</accession>
<accession>Q8GXL1</accession>
<comment type="function">
    <text evidence="3 5">Catalyzes the glutathione-dependent reduction of S-glutathionylquercetin to quercetin. In vitro, possesses glutathione-dependent thiol transferase activity toward 2-hydroxyethyl disulfide (HED).</text>
</comment>
<comment type="catalytic activity">
    <reaction>
        <text>RX + glutathione = an S-substituted glutathione + a halide anion + H(+)</text>
        <dbReference type="Rhea" id="RHEA:16437"/>
        <dbReference type="ChEBI" id="CHEBI:15378"/>
        <dbReference type="ChEBI" id="CHEBI:16042"/>
        <dbReference type="ChEBI" id="CHEBI:17792"/>
        <dbReference type="ChEBI" id="CHEBI:57925"/>
        <dbReference type="ChEBI" id="CHEBI:90779"/>
        <dbReference type="EC" id="2.5.1.18"/>
    </reaction>
</comment>
<comment type="subcellular location">
    <subcellularLocation>
        <location evidence="4">Plastid</location>
        <location evidence="4">Chloroplast</location>
    </subcellularLocation>
</comment>
<comment type="similarity">
    <text evidence="6">Belongs to the GST superfamily. Lambda family.</text>
</comment>
<comment type="sequence caution" evidence="6">
    <conflict type="erroneous initiation">
        <sequence resource="EMBL-CDS" id="BAC42803"/>
    </conflict>
    <text>Truncated N-terminus.</text>
</comment>
<evidence type="ECO:0000250" key="1"/>
<evidence type="ECO:0000255" key="2"/>
<evidence type="ECO:0000269" key="3">
    <source>
    </source>
</evidence>
<evidence type="ECO:0000269" key="4">
    <source>
    </source>
</evidence>
<evidence type="ECO:0000269" key="5">
    <source>
    </source>
</evidence>
<evidence type="ECO:0000305" key="6"/>
<name>GSTL2_ARATH</name>
<reference key="1">
    <citation type="journal article" date="2000" name="Nature">
        <title>Sequence and analysis of chromosome 3 of the plant Arabidopsis thaliana.</title>
        <authorList>
            <person name="Salanoubat M."/>
            <person name="Lemcke K."/>
            <person name="Rieger M."/>
            <person name="Ansorge W."/>
            <person name="Unseld M."/>
            <person name="Fartmann B."/>
            <person name="Valle G."/>
            <person name="Bloecker H."/>
            <person name="Perez-Alonso M."/>
            <person name="Obermaier B."/>
            <person name="Delseny M."/>
            <person name="Boutry M."/>
            <person name="Grivell L.A."/>
            <person name="Mache R."/>
            <person name="Puigdomenech P."/>
            <person name="De Simone V."/>
            <person name="Choisne N."/>
            <person name="Artiguenave F."/>
            <person name="Robert C."/>
            <person name="Brottier P."/>
            <person name="Wincker P."/>
            <person name="Cattolico L."/>
            <person name="Weissenbach J."/>
            <person name="Saurin W."/>
            <person name="Quetier F."/>
            <person name="Schaefer M."/>
            <person name="Mueller-Auer S."/>
            <person name="Gabel C."/>
            <person name="Fuchs M."/>
            <person name="Benes V."/>
            <person name="Wurmbach E."/>
            <person name="Drzonek H."/>
            <person name="Erfle H."/>
            <person name="Jordan N."/>
            <person name="Bangert S."/>
            <person name="Wiedelmann R."/>
            <person name="Kranz H."/>
            <person name="Voss H."/>
            <person name="Holland R."/>
            <person name="Brandt P."/>
            <person name="Nyakatura G."/>
            <person name="Vezzi A."/>
            <person name="D'Angelo M."/>
            <person name="Pallavicini A."/>
            <person name="Toppo S."/>
            <person name="Simionati B."/>
            <person name="Conrad A."/>
            <person name="Hornischer K."/>
            <person name="Kauer G."/>
            <person name="Loehnert T.-H."/>
            <person name="Nordsiek G."/>
            <person name="Reichelt J."/>
            <person name="Scharfe M."/>
            <person name="Schoen O."/>
            <person name="Bargues M."/>
            <person name="Terol J."/>
            <person name="Climent J."/>
            <person name="Navarro P."/>
            <person name="Collado C."/>
            <person name="Perez-Perez A."/>
            <person name="Ottenwaelder B."/>
            <person name="Duchemin D."/>
            <person name="Cooke R."/>
            <person name="Laudie M."/>
            <person name="Berger-Llauro C."/>
            <person name="Purnelle B."/>
            <person name="Masuy D."/>
            <person name="de Haan M."/>
            <person name="Maarse A.C."/>
            <person name="Alcaraz J.-P."/>
            <person name="Cottet A."/>
            <person name="Casacuberta E."/>
            <person name="Monfort A."/>
            <person name="Argiriou A."/>
            <person name="Flores M."/>
            <person name="Liguori R."/>
            <person name="Vitale D."/>
            <person name="Mannhaupt G."/>
            <person name="Haase D."/>
            <person name="Schoof H."/>
            <person name="Rudd S."/>
            <person name="Zaccaria P."/>
            <person name="Mewes H.-W."/>
            <person name="Mayer K.F.X."/>
            <person name="Kaul S."/>
            <person name="Town C.D."/>
            <person name="Koo H.L."/>
            <person name="Tallon L.J."/>
            <person name="Jenkins J."/>
            <person name="Rooney T."/>
            <person name="Rizzo M."/>
            <person name="Walts A."/>
            <person name="Utterback T."/>
            <person name="Fujii C.Y."/>
            <person name="Shea T.P."/>
            <person name="Creasy T.H."/>
            <person name="Haas B."/>
            <person name="Maiti R."/>
            <person name="Wu D."/>
            <person name="Peterson J."/>
            <person name="Van Aken S."/>
            <person name="Pai G."/>
            <person name="Militscher J."/>
            <person name="Sellers P."/>
            <person name="Gill J.E."/>
            <person name="Feldblyum T.V."/>
            <person name="Preuss D."/>
            <person name="Lin X."/>
            <person name="Nierman W.C."/>
            <person name="Salzberg S.L."/>
            <person name="White O."/>
            <person name="Venter J.C."/>
            <person name="Fraser C.M."/>
            <person name="Kaneko T."/>
            <person name="Nakamura Y."/>
            <person name="Sato S."/>
            <person name="Kato T."/>
            <person name="Asamizu E."/>
            <person name="Sasamoto S."/>
            <person name="Kimura T."/>
            <person name="Idesawa K."/>
            <person name="Kawashima K."/>
            <person name="Kishida Y."/>
            <person name="Kiyokawa C."/>
            <person name="Kohara M."/>
            <person name="Matsumoto M."/>
            <person name="Matsuno A."/>
            <person name="Muraki A."/>
            <person name="Nakayama S."/>
            <person name="Nakazaki N."/>
            <person name="Shinpo S."/>
            <person name="Takeuchi C."/>
            <person name="Wada T."/>
            <person name="Watanabe A."/>
            <person name="Yamada M."/>
            <person name="Yasuda M."/>
            <person name="Tabata S."/>
        </authorList>
    </citation>
    <scope>NUCLEOTIDE SEQUENCE [LARGE SCALE GENOMIC DNA]</scope>
    <source>
        <strain>cv. Columbia</strain>
    </source>
</reference>
<reference key="2">
    <citation type="journal article" date="2017" name="Plant J.">
        <title>Araport11: a complete reannotation of the Arabidopsis thaliana reference genome.</title>
        <authorList>
            <person name="Cheng C.Y."/>
            <person name="Krishnakumar V."/>
            <person name="Chan A.P."/>
            <person name="Thibaud-Nissen F."/>
            <person name="Schobel S."/>
            <person name="Town C.D."/>
        </authorList>
    </citation>
    <scope>GENOME REANNOTATION</scope>
    <source>
        <strain>cv. Columbia</strain>
    </source>
</reference>
<reference key="3">
    <citation type="submission" date="2007-01" db="EMBL/GenBank/DDBJ databases">
        <title>Arabidopsis ORF clones.</title>
        <authorList>
            <person name="Bautista V.R."/>
            <person name="Kim C.J."/>
            <person name="Chen H."/>
            <person name="Wu S.Y."/>
            <person name="De Los Reyes C."/>
            <person name="Ecker J.R."/>
        </authorList>
    </citation>
    <scope>NUCLEOTIDE SEQUENCE [LARGE SCALE MRNA]</scope>
    <source>
        <strain>cv. Columbia</strain>
    </source>
</reference>
<reference key="4">
    <citation type="journal article" date="2002" name="Science">
        <title>Functional annotation of a full-length Arabidopsis cDNA collection.</title>
        <authorList>
            <person name="Seki M."/>
            <person name="Narusaka M."/>
            <person name="Kamiya A."/>
            <person name="Ishida J."/>
            <person name="Satou M."/>
            <person name="Sakurai T."/>
            <person name="Nakajima M."/>
            <person name="Enju A."/>
            <person name="Akiyama K."/>
            <person name="Oono Y."/>
            <person name="Muramatsu M."/>
            <person name="Hayashizaki Y."/>
            <person name="Kawai J."/>
            <person name="Carninci P."/>
            <person name="Itoh M."/>
            <person name="Ishii Y."/>
            <person name="Arakawa T."/>
            <person name="Shibata K."/>
            <person name="Shinagawa A."/>
            <person name="Shinozaki K."/>
        </authorList>
    </citation>
    <scope>NUCLEOTIDE SEQUENCE [LARGE SCALE MRNA] OF 6-292</scope>
    <source>
        <strain>cv. Columbia</strain>
    </source>
</reference>
<reference key="5">
    <citation type="journal article" date="2002" name="J. Biol. Chem.">
        <title>Functional divergence in the glutathione transferase superfamily in plants. Identification of two classes with putative functions in redox homeostasis in Arabidopsis thaliana.</title>
        <authorList>
            <person name="Dixon D.P."/>
            <person name="Davis B.G."/>
            <person name="Edwards R."/>
        </authorList>
    </citation>
    <scope>FUNCTION</scope>
</reference>
<reference key="6">
    <citation type="journal article" date="2009" name="J. Exp. Bot.">
        <title>Enzyme activities and subcellular localization of members of the Arabidopsis glutathione transferase superfamily.</title>
        <authorList>
            <person name="Dixon D.P."/>
            <person name="Hawkins T."/>
            <person name="Hussey P.J."/>
            <person name="Edwards R."/>
        </authorList>
    </citation>
    <scope>SUBCELLULAR LOCATION</scope>
</reference>
<reference key="7">
    <citation type="journal article" date="2010" name="J. Biol. Chem.">
        <title>Roles for stress-inducible lambda glutathione transferases in flavonoid metabolism in plants as identified by ligand fishing.</title>
        <authorList>
            <person name="Dixon D.P."/>
            <person name="Edwards R."/>
        </authorList>
    </citation>
    <scope>FUNCTION</scope>
</reference>
<sequence length="292" mass="33058">MSVGLKVSAFLHPTLALSSRDVSLSSSSSSLYLDRKILRPGSGRRWCKSRRTEPILAVVESSRVPELDSSSEPVQVFDGSTRLYISYTCPFAQRAWIARNYKGLQNKIELVPIDLKNRPAWYKEKVYSANKVPALEHNNRVLGESLDLIKYIDTNFEGPSLTPDGLEKQVVADELLSYTDSFSKAVRSTLNGTDTNAADVAFDYIEQALSKFNEGPFFLGQFSLVDVAYAPFIERFRLILSDVMNVDITSGRPNLALWIQEMNKIEAYTETRQDPQELVERYKRRVQAEARL</sequence>
<keyword id="KW-0150">Chloroplast</keyword>
<keyword id="KW-0216">Detoxification</keyword>
<keyword id="KW-0934">Plastid</keyword>
<keyword id="KW-1185">Reference proteome</keyword>
<keyword id="KW-0808">Transferase</keyword>
<keyword id="KW-0809">Transit peptide</keyword>
<dbReference type="EC" id="2.5.1.18"/>
<dbReference type="EMBL" id="AL132970">
    <property type="protein sequence ID" value="CAB82699.1"/>
    <property type="molecule type" value="Genomic_DNA"/>
</dbReference>
<dbReference type="EMBL" id="CP002686">
    <property type="protein sequence ID" value="AEE79331.1"/>
    <property type="molecule type" value="Genomic_DNA"/>
</dbReference>
<dbReference type="EMBL" id="BT030006">
    <property type="protein sequence ID" value="ABN04744.1"/>
    <property type="molecule type" value="mRNA"/>
</dbReference>
<dbReference type="EMBL" id="AK118180">
    <property type="protein sequence ID" value="BAC42803.1"/>
    <property type="status" value="ALT_INIT"/>
    <property type="molecule type" value="mRNA"/>
</dbReference>
<dbReference type="PIR" id="T47643">
    <property type="entry name" value="T47643"/>
</dbReference>
<dbReference type="RefSeq" id="NP_191064.1">
    <property type="nucleotide sequence ID" value="NM_115362.2"/>
</dbReference>
<dbReference type="SMR" id="Q9M2W2"/>
<dbReference type="FunCoup" id="Q9M2W2">
    <property type="interactions" value="1267"/>
</dbReference>
<dbReference type="STRING" id="3702.Q9M2W2"/>
<dbReference type="PaxDb" id="3702-AT3G55040.1"/>
<dbReference type="ProteomicsDB" id="247335"/>
<dbReference type="EnsemblPlants" id="AT3G55040.1">
    <property type="protein sequence ID" value="AT3G55040.1"/>
    <property type="gene ID" value="AT3G55040"/>
</dbReference>
<dbReference type="GeneID" id="824670"/>
<dbReference type="Gramene" id="AT3G55040.1">
    <property type="protein sequence ID" value="AT3G55040.1"/>
    <property type="gene ID" value="AT3G55040"/>
</dbReference>
<dbReference type="KEGG" id="ath:AT3G55040"/>
<dbReference type="Araport" id="AT3G55040"/>
<dbReference type="TAIR" id="AT3G55040">
    <property type="gene designation" value="GSTL2"/>
</dbReference>
<dbReference type="eggNOG" id="KOG0406">
    <property type="taxonomic scope" value="Eukaryota"/>
</dbReference>
<dbReference type="HOGENOM" id="CLU_072699_0_0_1"/>
<dbReference type="InParanoid" id="Q9M2W2"/>
<dbReference type="OMA" id="ALWIQEM"/>
<dbReference type="PhylomeDB" id="Q9M2W2"/>
<dbReference type="PRO" id="PR:Q9M2W2"/>
<dbReference type="Proteomes" id="UP000006548">
    <property type="component" value="Chromosome 3"/>
</dbReference>
<dbReference type="ExpressionAtlas" id="Q9M2W2">
    <property type="expression patterns" value="baseline and differential"/>
</dbReference>
<dbReference type="GO" id="GO:0009507">
    <property type="term" value="C:chloroplast"/>
    <property type="evidence" value="ECO:0007005"/>
    <property type="project" value="TAIR"/>
</dbReference>
<dbReference type="GO" id="GO:0009570">
    <property type="term" value="C:chloroplast stroma"/>
    <property type="evidence" value="ECO:0007005"/>
    <property type="project" value="TAIR"/>
</dbReference>
<dbReference type="GO" id="GO:0005829">
    <property type="term" value="C:cytosol"/>
    <property type="evidence" value="ECO:0007005"/>
    <property type="project" value="TAIR"/>
</dbReference>
<dbReference type="GO" id="GO:0005777">
    <property type="term" value="C:peroxisome"/>
    <property type="evidence" value="ECO:0000314"/>
    <property type="project" value="TAIR"/>
</dbReference>
<dbReference type="GO" id="GO:0004364">
    <property type="term" value="F:glutathione transferase activity"/>
    <property type="evidence" value="ECO:0000314"/>
    <property type="project" value="TAIR"/>
</dbReference>
<dbReference type="GO" id="GO:0010731">
    <property type="term" value="P:protein glutathionylation"/>
    <property type="evidence" value="ECO:0000314"/>
    <property type="project" value="TAIR"/>
</dbReference>
<dbReference type="GO" id="GO:0009636">
    <property type="term" value="P:response to toxic substance"/>
    <property type="evidence" value="ECO:0007669"/>
    <property type="project" value="UniProtKB-KW"/>
</dbReference>
<dbReference type="CDD" id="cd03203">
    <property type="entry name" value="GST_C_Lambda"/>
    <property type="match status" value="1"/>
</dbReference>
<dbReference type="FunFam" id="3.40.30.10:FF:000091">
    <property type="entry name" value="Glutathione S-transferase L2, chloroplastic"/>
    <property type="match status" value="1"/>
</dbReference>
<dbReference type="FunFam" id="1.20.1050.10:FF:000041">
    <property type="entry name" value="Lambda class glutathione S-transferase"/>
    <property type="match status" value="1"/>
</dbReference>
<dbReference type="Gene3D" id="1.20.1050.10">
    <property type="match status" value="1"/>
</dbReference>
<dbReference type="Gene3D" id="3.40.30.10">
    <property type="entry name" value="Glutaredoxin"/>
    <property type="match status" value="1"/>
</dbReference>
<dbReference type="InterPro" id="IPR036282">
    <property type="entry name" value="Glutathione-S-Trfase_C_sf"/>
</dbReference>
<dbReference type="InterPro" id="IPR040079">
    <property type="entry name" value="Glutathione_S-Trfase"/>
</dbReference>
<dbReference type="InterPro" id="IPR004045">
    <property type="entry name" value="Glutathione_S-Trfase_N"/>
</dbReference>
<dbReference type="InterPro" id="IPR044629">
    <property type="entry name" value="GSTL1/2/3"/>
</dbReference>
<dbReference type="InterPro" id="IPR036249">
    <property type="entry name" value="Thioredoxin-like_sf"/>
</dbReference>
<dbReference type="PANTHER" id="PTHR44328">
    <property type="entry name" value="GLUTATHIONE S-TRANSFERASE L1"/>
    <property type="match status" value="1"/>
</dbReference>
<dbReference type="PANTHER" id="PTHR44328:SF11">
    <property type="entry name" value="GLUTATHIONE S-TRANSFERASE L2, CHLOROPLASTIC"/>
    <property type="match status" value="1"/>
</dbReference>
<dbReference type="Pfam" id="PF13410">
    <property type="entry name" value="GST_C_2"/>
    <property type="match status" value="1"/>
</dbReference>
<dbReference type="Pfam" id="PF13417">
    <property type="entry name" value="GST_N_3"/>
    <property type="match status" value="1"/>
</dbReference>
<dbReference type="SFLD" id="SFLDS00019">
    <property type="entry name" value="Glutathione_Transferase_(cytos"/>
    <property type="match status" value="1"/>
</dbReference>
<dbReference type="SFLD" id="SFLDG00358">
    <property type="entry name" value="Main_(cytGST)"/>
    <property type="match status" value="1"/>
</dbReference>
<dbReference type="SUPFAM" id="SSF47616">
    <property type="entry name" value="GST C-terminal domain-like"/>
    <property type="match status" value="1"/>
</dbReference>
<dbReference type="SUPFAM" id="SSF52833">
    <property type="entry name" value="Thioredoxin-like"/>
    <property type="match status" value="1"/>
</dbReference>
<dbReference type="PROSITE" id="PS50405">
    <property type="entry name" value="GST_CTER"/>
    <property type="match status" value="1"/>
</dbReference>
<dbReference type="PROSITE" id="PS50404">
    <property type="entry name" value="GST_NTER"/>
    <property type="match status" value="1"/>
</dbReference>
<organism>
    <name type="scientific">Arabidopsis thaliana</name>
    <name type="common">Mouse-ear cress</name>
    <dbReference type="NCBI Taxonomy" id="3702"/>
    <lineage>
        <taxon>Eukaryota</taxon>
        <taxon>Viridiplantae</taxon>
        <taxon>Streptophyta</taxon>
        <taxon>Embryophyta</taxon>
        <taxon>Tracheophyta</taxon>
        <taxon>Spermatophyta</taxon>
        <taxon>Magnoliopsida</taxon>
        <taxon>eudicotyledons</taxon>
        <taxon>Gunneridae</taxon>
        <taxon>Pentapetalae</taxon>
        <taxon>rosids</taxon>
        <taxon>malvids</taxon>
        <taxon>Brassicales</taxon>
        <taxon>Brassicaceae</taxon>
        <taxon>Camelineae</taxon>
        <taxon>Arabidopsis</taxon>
    </lineage>
</organism>
<gene>
    <name type="primary">GSTL2</name>
    <name type="ordered locus">At3g55040</name>
    <name type="ORF">T15C9.60</name>
</gene>
<feature type="transit peptide" description="Chloroplast" evidence="2">
    <location>
        <begin position="1"/>
        <end position="56"/>
    </location>
</feature>
<feature type="chain" id="PRO_0000413578" description="Glutathione S-transferase L2, chloroplastic">
    <location>
        <begin position="57"/>
        <end position="292"/>
    </location>
</feature>
<feature type="domain" description="GST N-terminal">
    <location>
        <begin position="79"/>
        <end position="160"/>
    </location>
</feature>
<feature type="domain" description="GST C-terminal">
    <location>
        <begin position="130"/>
        <end position="286"/>
    </location>
</feature>
<feature type="binding site" evidence="1">
    <location>
        <begin position="89"/>
        <end position="90"/>
    </location>
    <ligand>
        <name>glutathione</name>
        <dbReference type="ChEBI" id="CHEBI:57925"/>
    </ligand>
</feature>
<feature type="binding site" evidence="1">
    <location>
        <begin position="117"/>
        <end position="118"/>
    </location>
    <ligand>
        <name>glutathione</name>
        <dbReference type="ChEBI" id="CHEBI:57925"/>
    </ligand>
</feature>
<feature type="binding site" evidence="1">
    <location>
        <begin position="131"/>
        <end position="132"/>
    </location>
    <ligand>
        <name>glutathione</name>
        <dbReference type="ChEBI" id="CHEBI:57925"/>
    </ligand>
</feature>
<feature type="binding site" evidence="1">
    <location>
        <begin position="144"/>
        <end position="145"/>
    </location>
    <ligand>
        <name>glutathione</name>
        <dbReference type="ChEBI" id="CHEBI:57925"/>
    </ligand>
</feature>
<proteinExistence type="evidence at transcript level"/>
<protein>
    <recommendedName>
        <fullName>Glutathione S-transferase L2, chloroplastic</fullName>
        <shortName>AtGSTL2</shortName>
        <ecNumber>2.5.1.18</ecNumber>
    </recommendedName>
    <alternativeName>
        <fullName>GST class-lambda member 2</fullName>
    </alternativeName>
</protein>